<comment type="function">
    <text evidence="1">Converts N-acetylmannosamine-6-phosphate (ManNAc-6-P) to N-acetylglucosamine-6-phosphate (GlcNAc-6-P).</text>
</comment>
<comment type="catalytic activity">
    <reaction evidence="1">
        <text>an N-acyl-D-glucosamine 6-phosphate = an N-acyl-D-mannosamine 6-phosphate</text>
        <dbReference type="Rhea" id="RHEA:23932"/>
        <dbReference type="ChEBI" id="CHEBI:57599"/>
        <dbReference type="ChEBI" id="CHEBI:57666"/>
        <dbReference type="EC" id="5.1.3.9"/>
    </reaction>
</comment>
<comment type="pathway">
    <text evidence="1">Amino-sugar metabolism; N-acetylneuraminate degradation; D-fructose 6-phosphate from N-acetylneuraminate: step 3/5.</text>
</comment>
<comment type="similarity">
    <text evidence="1">Belongs to the NanE family.</text>
</comment>
<feature type="chain" id="PRO_0000179791" description="Putative N-acetylmannosamine-6-phosphate 2-epimerase 1">
    <location>
        <begin position="1"/>
        <end position="226"/>
    </location>
</feature>
<gene>
    <name evidence="1" type="primary">nanE1</name>
    <name type="ordered locus">SPA1722</name>
</gene>
<name>NANE1_SALPA</name>
<dbReference type="EC" id="5.1.3.9" evidence="1"/>
<dbReference type="EMBL" id="CP000026">
    <property type="protein sequence ID" value="AAV77643.1"/>
    <property type="molecule type" value="Genomic_DNA"/>
</dbReference>
<dbReference type="RefSeq" id="WP_000054244.1">
    <property type="nucleotide sequence ID" value="NC_006511.1"/>
</dbReference>
<dbReference type="SMR" id="Q5PG85"/>
<dbReference type="KEGG" id="spt:SPA1722"/>
<dbReference type="HOGENOM" id="CLU_086300_0_0_6"/>
<dbReference type="UniPathway" id="UPA00629">
    <property type="reaction ID" value="UER00682"/>
</dbReference>
<dbReference type="Proteomes" id="UP000008185">
    <property type="component" value="Chromosome"/>
</dbReference>
<dbReference type="GO" id="GO:0005829">
    <property type="term" value="C:cytosol"/>
    <property type="evidence" value="ECO:0007669"/>
    <property type="project" value="TreeGrafter"/>
</dbReference>
<dbReference type="GO" id="GO:0047465">
    <property type="term" value="F:N-acylglucosamine-6-phosphate 2-epimerase activity"/>
    <property type="evidence" value="ECO:0007669"/>
    <property type="project" value="UniProtKB-EC"/>
</dbReference>
<dbReference type="GO" id="GO:0005975">
    <property type="term" value="P:carbohydrate metabolic process"/>
    <property type="evidence" value="ECO:0007669"/>
    <property type="project" value="UniProtKB-UniRule"/>
</dbReference>
<dbReference type="GO" id="GO:0006053">
    <property type="term" value="P:N-acetylmannosamine catabolic process"/>
    <property type="evidence" value="ECO:0007669"/>
    <property type="project" value="TreeGrafter"/>
</dbReference>
<dbReference type="GO" id="GO:0019262">
    <property type="term" value="P:N-acetylneuraminate catabolic process"/>
    <property type="evidence" value="ECO:0007669"/>
    <property type="project" value="UniProtKB-UniRule"/>
</dbReference>
<dbReference type="CDD" id="cd04729">
    <property type="entry name" value="NanE"/>
    <property type="match status" value="1"/>
</dbReference>
<dbReference type="FunFam" id="3.20.20.70:FF:000035">
    <property type="entry name" value="Putative N-acetylmannosamine-6-phosphate 2-epimerase"/>
    <property type="match status" value="1"/>
</dbReference>
<dbReference type="Gene3D" id="3.20.20.70">
    <property type="entry name" value="Aldolase class I"/>
    <property type="match status" value="1"/>
</dbReference>
<dbReference type="HAMAP" id="MF_01235">
    <property type="entry name" value="ManNAc6P_epimer"/>
    <property type="match status" value="1"/>
</dbReference>
<dbReference type="InterPro" id="IPR013785">
    <property type="entry name" value="Aldolase_TIM"/>
</dbReference>
<dbReference type="InterPro" id="IPR007260">
    <property type="entry name" value="NanE"/>
</dbReference>
<dbReference type="InterPro" id="IPR011060">
    <property type="entry name" value="RibuloseP-bd_barrel"/>
</dbReference>
<dbReference type="NCBIfam" id="NF002231">
    <property type="entry name" value="PRK01130.1"/>
    <property type="match status" value="1"/>
</dbReference>
<dbReference type="PANTHER" id="PTHR36204">
    <property type="entry name" value="N-ACETYLMANNOSAMINE-6-PHOSPHATE 2-EPIMERASE-RELATED"/>
    <property type="match status" value="1"/>
</dbReference>
<dbReference type="PANTHER" id="PTHR36204:SF1">
    <property type="entry name" value="N-ACETYLMANNOSAMINE-6-PHOSPHATE 2-EPIMERASE-RELATED"/>
    <property type="match status" value="1"/>
</dbReference>
<dbReference type="Pfam" id="PF04131">
    <property type="entry name" value="NanE"/>
    <property type="match status" value="1"/>
</dbReference>
<dbReference type="SUPFAM" id="SSF51366">
    <property type="entry name" value="Ribulose-phoshate binding barrel"/>
    <property type="match status" value="1"/>
</dbReference>
<organism>
    <name type="scientific">Salmonella paratyphi A (strain ATCC 9150 / SARB42)</name>
    <dbReference type="NCBI Taxonomy" id="295319"/>
    <lineage>
        <taxon>Bacteria</taxon>
        <taxon>Pseudomonadati</taxon>
        <taxon>Pseudomonadota</taxon>
        <taxon>Gammaproteobacteria</taxon>
        <taxon>Enterobacterales</taxon>
        <taxon>Enterobacteriaceae</taxon>
        <taxon>Salmonella</taxon>
    </lineage>
</organism>
<accession>Q5PG85</accession>
<protein>
    <recommendedName>
        <fullName evidence="1">Putative N-acetylmannosamine-6-phosphate 2-epimerase 1</fullName>
        <ecNumber evidence="1">5.1.3.9</ecNumber>
    </recommendedName>
    <alternativeName>
        <fullName evidence="1">ManNAc-6-P epimerase 1</fullName>
    </alternativeName>
</protein>
<evidence type="ECO:0000255" key="1">
    <source>
        <dbReference type="HAMAP-Rule" id="MF_01235"/>
    </source>
</evidence>
<reference key="1">
    <citation type="journal article" date="2004" name="Nat. Genet.">
        <title>Comparison of genome degradation in Paratyphi A and Typhi, human-restricted serovars of Salmonella enterica that cause typhoid.</title>
        <authorList>
            <person name="McClelland M."/>
            <person name="Sanderson K.E."/>
            <person name="Clifton S.W."/>
            <person name="Latreille P."/>
            <person name="Porwollik S."/>
            <person name="Sabo A."/>
            <person name="Meyer R."/>
            <person name="Bieri T."/>
            <person name="Ozersky P."/>
            <person name="McLellan M."/>
            <person name="Harkins C.R."/>
            <person name="Wang C."/>
            <person name="Nguyen C."/>
            <person name="Berghoff A."/>
            <person name="Elliott G."/>
            <person name="Kohlberg S."/>
            <person name="Strong C."/>
            <person name="Du F."/>
            <person name="Carter J."/>
            <person name="Kremizki C."/>
            <person name="Layman D."/>
            <person name="Leonard S."/>
            <person name="Sun H."/>
            <person name="Fulton L."/>
            <person name="Nash W."/>
            <person name="Miner T."/>
            <person name="Minx P."/>
            <person name="Delehaunty K."/>
            <person name="Fronick C."/>
            <person name="Magrini V."/>
            <person name="Nhan M."/>
            <person name="Warren W."/>
            <person name="Florea L."/>
            <person name="Spieth J."/>
            <person name="Wilson R.K."/>
        </authorList>
    </citation>
    <scope>NUCLEOTIDE SEQUENCE [LARGE SCALE GENOMIC DNA]</scope>
    <source>
        <strain>ATCC 9150 / SARB42</strain>
    </source>
</reference>
<proteinExistence type="inferred from homology"/>
<sequence>MSLLARLEQSVHENGGLIVSCQPVPGSPMDKPEIVAAMAQAAASAGAVAVRIEGIENLRTVRPHLSVPIIGIIKRDLTGSPVRITPYLQDVDALAQAGADIIAFDASFRSRPVDIDSLLTRIRLHGLLAMADCSTVNEGISCHQKGIEFIGTTLSGYTGPITPVEPDLAMVTQLSHAGCRVIAEGRYNTPALAANAIEHGAWAVTVGSAITRIEHICQWFSHAVRR</sequence>
<keyword id="KW-0119">Carbohydrate metabolism</keyword>
<keyword id="KW-0413">Isomerase</keyword>